<geneLocation type="chloroplast"/>
<organism>
    <name type="scientific">Chlorokybus atmophyticus</name>
    <name type="common">Soil alga</name>
    <dbReference type="NCBI Taxonomy" id="3144"/>
    <lineage>
        <taxon>Eukaryota</taxon>
        <taxon>Viridiplantae</taxon>
        <taxon>Streptophyta</taxon>
        <taxon>Chlorokybophyceae</taxon>
        <taxon>Chlorokybales</taxon>
        <taxon>Chlorokybaceae</taxon>
        <taxon>Chlorokybus</taxon>
    </lineage>
</organism>
<accession>A2CI71</accession>
<name>CYST_CHLAT</name>
<reference key="1">
    <citation type="journal article" date="2007" name="BMC Biol.">
        <title>A clade uniting the green algae Mesostigma viride and Chlorokybus atmophyticus represents the deepest branch of the Streptophyta in chloroplast genome-based phylogenies.</title>
        <authorList>
            <person name="Lemieux C."/>
            <person name="Otis C."/>
            <person name="Turmel M."/>
        </authorList>
    </citation>
    <scope>NUCLEOTIDE SEQUENCE [LARGE SCALE GENOMIC DNA]</scope>
    <source>
        <strain>SAG 48.80</strain>
    </source>
</reference>
<comment type="function">
    <text evidence="1">Part of the ABC transporter complex cysAWTP (TC 3.A.1.6.1) involved in sulfate/thiosulfate import. Probably responsible for the translocation of the substrate across the membrane (By similarity).</text>
</comment>
<comment type="subcellular location">
    <subcellularLocation>
        <location evidence="3">Plastid</location>
        <location evidence="3">Chloroplast membrane</location>
        <topology evidence="3">Multi-pass membrane protein</topology>
    </subcellularLocation>
</comment>
<comment type="similarity">
    <text evidence="3">Belongs to the binding-protein-dependent transport system permease family. CysTW subfamily.</text>
</comment>
<dbReference type="EMBL" id="DQ422812">
    <property type="protein sequence ID" value="ABM87953.1"/>
    <property type="molecule type" value="Genomic_DNA"/>
</dbReference>
<dbReference type="RefSeq" id="YP_001019170.1">
    <property type="nucleotide sequence ID" value="NC_008822.1"/>
</dbReference>
<dbReference type="SMR" id="A2CI71"/>
<dbReference type="GeneID" id="4783323"/>
<dbReference type="GO" id="GO:0031969">
    <property type="term" value="C:chloroplast membrane"/>
    <property type="evidence" value="ECO:0007669"/>
    <property type="project" value="UniProtKB-SubCell"/>
</dbReference>
<dbReference type="GO" id="GO:0005886">
    <property type="term" value="C:plasma membrane"/>
    <property type="evidence" value="ECO:0007669"/>
    <property type="project" value="InterPro"/>
</dbReference>
<dbReference type="GO" id="GO:0015419">
    <property type="term" value="F:ABC-type sulfate transporter activity"/>
    <property type="evidence" value="ECO:0007669"/>
    <property type="project" value="InterPro"/>
</dbReference>
<dbReference type="CDD" id="cd06261">
    <property type="entry name" value="TM_PBP2"/>
    <property type="match status" value="1"/>
</dbReference>
<dbReference type="FunFam" id="1.10.3720.10:FF:000004">
    <property type="entry name" value="Sulfate transport system permease protein CysT"/>
    <property type="match status" value="1"/>
</dbReference>
<dbReference type="Gene3D" id="1.10.3720.10">
    <property type="entry name" value="MetI-like"/>
    <property type="match status" value="1"/>
</dbReference>
<dbReference type="InterPro" id="IPR011865">
    <property type="entry name" value="CysT_permease"/>
</dbReference>
<dbReference type="InterPro" id="IPR000515">
    <property type="entry name" value="MetI-like"/>
</dbReference>
<dbReference type="InterPro" id="IPR035906">
    <property type="entry name" value="MetI-like_sf"/>
</dbReference>
<dbReference type="InterPro" id="IPR005667">
    <property type="entry name" value="Sulph_transpt2"/>
</dbReference>
<dbReference type="NCBIfam" id="TIGR00969">
    <property type="entry name" value="3a0106s02"/>
    <property type="match status" value="1"/>
</dbReference>
<dbReference type="NCBIfam" id="TIGR02139">
    <property type="entry name" value="permease_CysT"/>
    <property type="match status" value="1"/>
</dbReference>
<dbReference type="PANTHER" id="PTHR30406">
    <property type="entry name" value="SULFATE TRANSPORT SYSTEM PERMEASE PROTEIN"/>
    <property type="match status" value="1"/>
</dbReference>
<dbReference type="PANTHER" id="PTHR30406:SF8">
    <property type="entry name" value="SULFATE TRANSPORT SYSTEM PERMEASE PROTEIN CYST"/>
    <property type="match status" value="1"/>
</dbReference>
<dbReference type="Pfam" id="PF00528">
    <property type="entry name" value="BPD_transp_1"/>
    <property type="match status" value="1"/>
</dbReference>
<dbReference type="SUPFAM" id="SSF161098">
    <property type="entry name" value="MetI-like"/>
    <property type="match status" value="1"/>
</dbReference>
<dbReference type="PROSITE" id="PS50928">
    <property type="entry name" value="ABC_TM1"/>
    <property type="match status" value="1"/>
</dbReference>
<evidence type="ECO:0000250" key="1"/>
<evidence type="ECO:0000255" key="2">
    <source>
        <dbReference type="PROSITE-ProRule" id="PRU00441"/>
    </source>
</evidence>
<evidence type="ECO:0000305" key="3"/>
<keyword id="KW-0150">Chloroplast</keyword>
<keyword id="KW-0472">Membrane</keyword>
<keyword id="KW-0934">Plastid</keyword>
<keyword id="KW-0764">Sulfate transport</keyword>
<keyword id="KW-0812">Transmembrane</keyword>
<keyword id="KW-1133">Transmembrane helix</keyword>
<keyword id="KW-0813">Transport</keyword>
<protein>
    <recommendedName>
        <fullName>Probable sulfate transport system permease protein cysT</fullName>
    </recommendedName>
</protein>
<proteinExistence type="inferred from homology"/>
<gene>
    <name type="primary">cysT</name>
</gene>
<feature type="chain" id="PRO_0000293975" description="Probable sulfate transport system permease protein cysT">
    <location>
        <begin position="1"/>
        <end position="286"/>
    </location>
</feature>
<feature type="transmembrane region" description="Helical" evidence="2">
    <location>
        <begin position="27"/>
        <end position="47"/>
    </location>
</feature>
<feature type="transmembrane region" description="Helical" evidence="2">
    <location>
        <begin position="77"/>
        <end position="97"/>
    </location>
</feature>
<feature type="transmembrane region" description="Helical" evidence="2">
    <location>
        <begin position="106"/>
        <end position="126"/>
    </location>
</feature>
<feature type="transmembrane region" description="Helical" evidence="2">
    <location>
        <begin position="147"/>
        <end position="167"/>
    </location>
</feature>
<feature type="transmembrane region" description="Helical" evidence="2">
    <location>
        <begin position="196"/>
        <end position="216"/>
    </location>
</feature>
<feature type="transmembrane region" description="Helical" evidence="2">
    <location>
        <begin position="225"/>
        <end position="245"/>
    </location>
</feature>
<feature type="transmembrane region" description="Helical" evidence="2">
    <location>
        <begin position="257"/>
        <end position="277"/>
    </location>
</feature>
<feature type="domain" description="ABC transmembrane type-1" evidence="2">
    <location>
        <begin position="71"/>
        <end position="272"/>
    </location>
</feature>
<sequence length="286" mass="31812">MSTNEMNQKKRLNRSGSLSSHLTRSWPWQLTLSYLFFMLILPVIALLSRASDELFKDFWQIAAEPVAISTYVVTLMTALFATLINGFFGVIIAWVLVRYNFPGKRIIDAAIDLPFALPTSVAGLTLATVYSDQGWIGHLFESIGIKVAFTRVGVAVAMIFVSFPFVVRTLQPVLVEIDQELEEAAWSLGASTWRTFWRVIFPPLTPAIVTGVALAFSRAIGEYGSVVIVASNIPFKDLTAPVLIFQRLEQYDYTGATIIGTVILSISLFLLFGINFIQSLNQLYVK</sequence>